<organism>
    <name type="scientific">Nitratiruptor sp. (strain SB155-2)</name>
    <dbReference type="NCBI Taxonomy" id="387092"/>
    <lineage>
        <taxon>Bacteria</taxon>
        <taxon>Pseudomonadati</taxon>
        <taxon>Campylobacterota</taxon>
        <taxon>Epsilonproteobacteria</taxon>
        <taxon>Nautiliales</taxon>
        <taxon>Nitratiruptoraceae</taxon>
        <taxon>Nitratiruptor</taxon>
    </lineage>
</organism>
<keyword id="KW-1185">Reference proteome</keyword>
<keyword id="KW-0686">Riboflavin biosynthesis</keyword>
<keyword id="KW-0808">Transferase</keyword>
<sequence length="154" mass="16638">MRIIEGKLRLDGSEKVAIIASRFNHIITDRLVEGAKDAFLRHGGNEENLDLVLVPGAFELPFALDKALSAQKYNGVCCLGAIIRGSTPHFDYVAAEATKGIANTTLKYQKPVTFGVLTTDTIEQAIERAGSKAGNKGFEAMTGLIELIDLYKGL</sequence>
<comment type="function">
    <text evidence="1">Catalyzes the formation of 6,7-dimethyl-8-ribityllumazine by condensation of 5-amino-6-(D-ribitylamino)uracil with 3,4-dihydroxy-2-butanone 4-phosphate. This is the penultimate step in the biosynthesis of riboflavin.</text>
</comment>
<comment type="catalytic activity">
    <reaction evidence="1">
        <text>(2S)-2-hydroxy-3-oxobutyl phosphate + 5-amino-6-(D-ribitylamino)uracil = 6,7-dimethyl-8-(1-D-ribityl)lumazine + phosphate + 2 H2O + H(+)</text>
        <dbReference type="Rhea" id="RHEA:26152"/>
        <dbReference type="ChEBI" id="CHEBI:15377"/>
        <dbReference type="ChEBI" id="CHEBI:15378"/>
        <dbReference type="ChEBI" id="CHEBI:15934"/>
        <dbReference type="ChEBI" id="CHEBI:43474"/>
        <dbReference type="ChEBI" id="CHEBI:58201"/>
        <dbReference type="ChEBI" id="CHEBI:58830"/>
        <dbReference type="EC" id="2.5.1.78"/>
    </reaction>
</comment>
<comment type="pathway">
    <text evidence="1">Cofactor biosynthesis; riboflavin biosynthesis; riboflavin from 2-hydroxy-3-oxobutyl phosphate and 5-amino-6-(D-ribitylamino)uracil: step 1/2.</text>
</comment>
<comment type="similarity">
    <text evidence="1">Belongs to the DMRL synthase family.</text>
</comment>
<reference key="1">
    <citation type="journal article" date="2007" name="Proc. Natl. Acad. Sci. U.S.A.">
        <title>Deep-sea vent epsilon-proteobacterial genomes provide insights into emergence of pathogens.</title>
        <authorList>
            <person name="Nakagawa S."/>
            <person name="Takaki Y."/>
            <person name="Shimamura S."/>
            <person name="Reysenbach A.-L."/>
            <person name="Takai K."/>
            <person name="Horikoshi K."/>
        </authorList>
    </citation>
    <scope>NUCLEOTIDE SEQUENCE [LARGE SCALE GENOMIC DNA]</scope>
    <source>
        <strain>SB155-2</strain>
    </source>
</reference>
<gene>
    <name evidence="1" type="primary">ribH</name>
    <name type="ordered locus">NIS_1361</name>
</gene>
<accession>A6Q4R0</accession>
<name>RISB_NITSB</name>
<feature type="chain" id="PRO_1000040466" description="6,7-dimethyl-8-ribityllumazine synthase">
    <location>
        <begin position="1"/>
        <end position="154"/>
    </location>
</feature>
<feature type="active site" description="Proton donor" evidence="1">
    <location>
        <position position="89"/>
    </location>
</feature>
<feature type="binding site" evidence="1">
    <location>
        <position position="23"/>
    </location>
    <ligand>
        <name>5-amino-6-(D-ribitylamino)uracil</name>
        <dbReference type="ChEBI" id="CHEBI:15934"/>
    </ligand>
</feature>
<feature type="binding site" evidence="1">
    <location>
        <begin position="57"/>
        <end position="59"/>
    </location>
    <ligand>
        <name>5-amino-6-(D-ribitylamino)uracil</name>
        <dbReference type="ChEBI" id="CHEBI:15934"/>
    </ligand>
</feature>
<feature type="binding site" evidence="1">
    <location>
        <begin position="81"/>
        <end position="83"/>
    </location>
    <ligand>
        <name>5-amino-6-(D-ribitylamino)uracil</name>
        <dbReference type="ChEBI" id="CHEBI:15934"/>
    </ligand>
</feature>
<feature type="binding site" evidence="1">
    <location>
        <begin position="86"/>
        <end position="87"/>
    </location>
    <ligand>
        <name>(2S)-2-hydroxy-3-oxobutyl phosphate</name>
        <dbReference type="ChEBI" id="CHEBI:58830"/>
    </ligand>
</feature>
<feature type="binding site" evidence="1">
    <location>
        <position position="114"/>
    </location>
    <ligand>
        <name>5-amino-6-(D-ribitylamino)uracil</name>
        <dbReference type="ChEBI" id="CHEBI:15934"/>
    </ligand>
</feature>
<feature type="binding site" evidence="1">
    <location>
        <position position="128"/>
    </location>
    <ligand>
        <name>(2S)-2-hydroxy-3-oxobutyl phosphate</name>
        <dbReference type="ChEBI" id="CHEBI:58830"/>
    </ligand>
</feature>
<protein>
    <recommendedName>
        <fullName evidence="1">6,7-dimethyl-8-ribityllumazine synthase</fullName>
        <shortName evidence="1">DMRL synthase</shortName>
        <shortName evidence="1">LS</shortName>
        <shortName evidence="1">Lumazine synthase</shortName>
        <ecNumber evidence="1">2.5.1.78</ecNumber>
    </recommendedName>
</protein>
<proteinExistence type="inferred from homology"/>
<evidence type="ECO:0000255" key="1">
    <source>
        <dbReference type="HAMAP-Rule" id="MF_00178"/>
    </source>
</evidence>
<dbReference type="EC" id="2.5.1.78" evidence="1"/>
<dbReference type="EMBL" id="AP009178">
    <property type="protein sequence ID" value="BAF70469.1"/>
    <property type="molecule type" value="Genomic_DNA"/>
</dbReference>
<dbReference type="RefSeq" id="WP_012082732.1">
    <property type="nucleotide sequence ID" value="NC_009662.1"/>
</dbReference>
<dbReference type="SMR" id="A6Q4R0"/>
<dbReference type="FunCoup" id="A6Q4R0">
    <property type="interactions" value="467"/>
</dbReference>
<dbReference type="STRING" id="387092.NIS_1361"/>
<dbReference type="KEGG" id="nis:NIS_1361"/>
<dbReference type="eggNOG" id="COG0054">
    <property type="taxonomic scope" value="Bacteria"/>
</dbReference>
<dbReference type="HOGENOM" id="CLU_089358_1_1_7"/>
<dbReference type="InParanoid" id="A6Q4R0"/>
<dbReference type="OrthoDB" id="9809709at2"/>
<dbReference type="UniPathway" id="UPA00275">
    <property type="reaction ID" value="UER00404"/>
</dbReference>
<dbReference type="Proteomes" id="UP000001118">
    <property type="component" value="Chromosome"/>
</dbReference>
<dbReference type="GO" id="GO:0005829">
    <property type="term" value="C:cytosol"/>
    <property type="evidence" value="ECO:0007669"/>
    <property type="project" value="TreeGrafter"/>
</dbReference>
<dbReference type="GO" id="GO:0009349">
    <property type="term" value="C:riboflavin synthase complex"/>
    <property type="evidence" value="ECO:0007669"/>
    <property type="project" value="InterPro"/>
</dbReference>
<dbReference type="GO" id="GO:0000906">
    <property type="term" value="F:6,7-dimethyl-8-ribityllumazine synthase activity"/>
    <property type="evidence" value="ECO:0007669"/>
    <property type="project" value="UniProtKB-UniRule"/>
</dbReference>
<dbReference type="GO" id="GO:0009231">
    <property type="term" value="P:riboflavin biosynthetic process"/>
    <property type="evidence" value="ECO:0007669"/>
    <property type="project" value="UniProtKB-UniRule"/>
</dbReference>
<dbReference type="CDD" id="cd09209">
    <property type="entry name" value="Lumazine_synthase-I"/>
    <property type="match status" value="1"/>
</dbReference>
<dbReference type="FunFam" id="3.40.50.960:FF:000001">
    <property type="entry name" value="6,7-dimethyl-8-ribityllumazine synthase"/>
    <property type="match status" value="1"/>
</dbReference>
<dbReference type="Gene3D" id="3.40.50.960">
    <property type="entry name" value="Lumazine/riboflavin synthase"/>
    <property type="match status" value="1"/>
</dbReference>
<dbReference type="HAMAP" id="MF_00178">
    <property type="entry name" value="Lumazine_synth"/>
    <property type="match status" value="1"/>
</dbReference>
<dbReference type="InterPro" id="IPR034964">
    <property type="entry name" value="LS"/>
</dbReference>
<dbReference type="InterPro" id="IPR002180">
    <property type="entry name" value="LS/RS"/>
</dbReference>
<dbReference type="InterPro" id="IPR036467">
    <property type="entry name" value="LS/RS_sf"/>
</dbReference>
<dbReference type="NCBIfam" id="TIGR00114">
    <property type="entry name" value="lumazine-synth"/>
    <property type="match status" value="1"/>
</dbReference>
<dbReference type="PANTHER" id="PTHR21058:SF0">
    <property type="entry name" value="6,7-DIMETHYL-8-RIBITYLLUMAZINE SYNTHASE"/>
    <property type="match status" value="1"/>
</dbReference>
<dbReference type="PANTHER" id="PTHR21058">
    <property type="entry name" value="6,7-DIMETHYL-8-RIBITYLLUMAZINE SYNTHASE DMRL SYNTHASE LUMAZINE SYNTHASE"/>
    <property type="match status" value="1"/>
</dbReference>
<dbReference type="Pfam" id="PF00885">
    <property type="entry name" value="DMRL_synthase"/>
    <property type="match status" value="1"/>
</dbReference>
<dbReference type="SUPFAM" id="SSF52121">
    <property type="entry name" value="Lumazine synthase"/>
    <property type="match status" value="1"/>
</dbReference>